<keyword id="KW-0227">DNA damage</keyword>
<keyword id="KW-0234">DNA repair</keyword>
<keyword id="KW-0235">DNA replication</keyword>
<keyword id="KW-0436">Ligase</keyword>
<keyword id="KW-0460">Magnesium</keyword>
<keyword id="KW-0464">Manganese</keyword>
<keyword id="KW-0479">Metal-binding</keyword>
<keyword id="KW-0520">NAD</keyword>
<keyword id="KW-1185">Reference proteome</keyword>
<keyword id="KW-0862">Zinc</keyword>
<accession>B4SCX5</accession>
<gene>
    <name evidence="1" type="primary">ligA</name>
    <name type="ordered locus">Ppha_0483</name>
</gene>
<dbReference type="EC" id="6.5.1.2" evidence="1"/>
<dbReference type="EMBL" id="CP001110">
    <property type="protein sequence ID" value="ACF42809.1"/>
    <property type="molecule type" value="Genomic_DNA"/>
</dbReference>
<dbReference type="RefSeq" id="WP_012507304.1">
    <property type="nucleotide sequence ID" value="NC_011060.1"/>
</dbReference>
<dbReference type="SMR" id="B4SCX5"/>
<dbReference type="STRING" id="324925.Ppha_0483"/>
<dbReference type="KEGG" id="pph:Ppha_0483"/>
<dbReference type="eggNOG" id="COG0272">
    <property type="taxonomic scope" value="Bacteria"/>
</dbReference>
<dbReference type="HOGENOM" id="CLU_007764_2_1_10"/>
<dbReference type="OrthoDB" id="9759736at2"/>
<dbReference type="Proteomes" id="UP000002724">
    <property type="component" value="Chromosome"/>
</dbReference>
<dbReference type="GO" id="GO:0005829">
    <property type="term" value="C:cytosol"/>
    <property type="evidence" value="ECO:0007669"/>
    <property type="project" value="TreeGrafter"/>
</dbReference>
<dbReference type="GO" id="GO:0003677">
    <property type="term" value="F:DNA binding"/>
    <property type="evidence" value="ECO:0007669"/>
    <property type="project" value="InterPro"/>
</dbReference>
<dbReference type="GO" id="GO:0003911">
    <property type="term" value="F:DNA ligase (NAD+) activity"/>
    <property type="evidence" value="ECO:0007669"/>
    <property type="project" value="UniProtKB-UniRule"/>
</dbReference>
<dbReference type="GO" id="GO:0046872">
    <property type="term" value="F:metal ion binding"/>
    <property type="evidence" value="ECO:0007669"/>
    <property type="project" value="UniProtKB-KW"/>
</dbReference>
<dbReference type="GO" id="GO:0006281">
    <property type="term" value="P:DNA repair"/>
    <property type="evidence" value="ECO:0007669"/>
    <property type="project" value="UniProtKB-KW"/>
</dbReference>
<dbReference type="GO" id="GO:0006260">
    <property type="term" value="P:DNA replication"/>
    <property type="evidence" value="ECO:0007669"/>
    <property type="project" value="UniProtKB-KW"/>
</dbReference>
<dbReference type="CDD" id="cd17748">
    <property type="entry name" value="BRCT_DNA_ligase_like"/>
    <property type="match status" value="1"/>
</dbReference>
<dbReference type="CDD" id="cd00114">
    <property type="entry name" value="LIGANc"/>
    <property type="match status" value="1"/>
</dbReference>
<dbReference type="FunFam" id="1.10.150.20:FF:000006">
    <property type="entry name" value="DNA ligase"/>
    <property type="match status" value="1"/>
</dbReference>
<dbReference type="FunFam" id="1.10.150.20:FF:000007">
    <property type="entry name" value="DNA ligase"/>
    <property type="match status" value="1"/>
</dbReference>
<dbReference type="Gene3D" id="6.20.10.30">
    <property type="match status" value="1"/>
</dbReference>
<dbReference type="Gene3D" id="1.10.150.20">
    <property type="entry name" value="5' to 3' exonuclease, C-terminal subdomain"/>
    <property type="match status" value="2"/>
</dbReference>
<dbReference type="Gene3D" id="3.40.50.10190">
    <property type="entry name" value="BRCT domain"/>
    <property type="match status" value="1"/>
</dbReference>
<dbReference type="Gene3D" id="3.30.470.30">
    <property type="entry name" value="DNA ligase/mRNA capping enzyme"/>
    <property type="match status" value="1"/>
</dbReference>
<dbReference type="Gene3D" id="1.10.287.610">
    <property type="entry name" value="Helix hairpin bin"/>
    <property type="match status" value="1"/>
</dbReference>
<dbReference type="Gene3D" id="2.40.50.140">
    <property type="entry name" value="Nucleic acid-binding proteins"/>
    <property type="match status" value="1"/>
</dbReference>
<dbReference type="HAMAP" id="MF_01588">
    <property type="entry name" value="DNA_ligase_A"/>
    <property type="match status" value="1"/>
</dbReference>
<dbReference type="InterPro" id="IPR001357">
    <property type="entry name" value="BRCT_dom"/>
</dbReference>
<dbReference type="InterPro" id="IPR036420">
    <property type="entry name" value="BRCT_dom_sf"/>
</dbReference>
<dbReference type="InterPro" id="IPR041663">
    <property type="entry name" value="DisA/LigA_HHH"/>
</dbReference>
<dbReference type="InterPro" id="IPR001679">
    <property type="entry name" value="DNA_ligase"/>
</dbReference>
<dbReference type="InterPro" id="IPR018239">
    <property type="entry name" value="DNA_ligase_AS"/>
</dbReference>
<dbReference type="InterPro" id="IPR013839">
    <property type="entry name" value="DNAligase_adenylation"/>
</dbReference>
<dbReference type="InterPro" id="IPR013840">
    <property type="entry name" value="DNAligase_N"/>
</dbReference>
<dbReference type="InterPro" id="IPR003583">
    <property type="entry name" value="Hlx-hairpin-Hlx_DNA-bd_motif"/>
</dbReference>
<dbReference type="InterPro" id="IPR012340">
    <property type="entry name" value="NA-bd_OB-fold"/>
</dbReference>
<dbReference type="InterPro" id="IPR004150">
    <property type="entry name" value="NAD_DNA_ligase_OB"/>
</dbReference>
<dbReference type="InterPro" id="IPR010994">
    <property type="entry name" value="RuvA_2-like"/>
</dbReference>
<dbReference type="InterPro" id="IPR004149">
    <property type="entry name" value="Znf_DNAligase_C4"/>
</dbReference>
<dbReference type="NCBIfam" id="TIGR00575">
    <property type="entry name" value="dnlj"/>
    <property type="match status" value="1"/>
</dbReference>
<dbReference type="NCBIfam" id="NF005932">
    <property type="entry name" value="PRK07956.1"/>
    <property type="match status" value="1"/>
</dbReference>
<dbReference type="PANTHER" id="PTHR23389">
    <property type="entry name" value="CHROMOSOME TRANSMISSION FIDELITY FACTOR 18"/>
    <property type="match status" value="1"/>
</dbReference>
<dbReference type="PANTHER" id="PTHR23389:SF9">
    <property type="entry name" value="DNA LIGASE"/>
    <property type="match status" value="1"/>
</dbReference>
<dbReference type="Pfam" id="PF00533">
    <property type="entry name" value="BRCT"/>
    <property type="match status" value="1"/>
</dbReference>
<dbReference type="Pfam" id="PF01653">
    <property type="entry name" value="DNA_ligase_aden"/>
    <property type="match status" value="1"/>
</dbReference>
<dbReference type="Pfam" id="PF03120">
    <property type="entry name" value="DNA_ligase_OB"/>
    <property type="match status" value="1"/>
</dbReference>
<dbReference type="Pfam" id="PF03119">
    <property type="entry name" value="DNA_ligase_ZBD"/>
    <property type="match status" value="1"/>
</dbReference>
<dbReference type="Pfam" id="PF12826">
    <property type="entry name" value="HHH_2"/>
    <property type="match status" value="1"/>
</dbReference>
<dbReference type="Pfam" id="PF14520">
    <property type="entry name" value="HHH_5"/>
    <property type="match status" value="1"/>
</dbReference>
<dbReference type="Pfam" id="PF22745">
    <property type="entry name" value="Nlig-Ia"/>
    <property type="match status" value="1"/>
</dbReference>
<dbReference type="PIRSF" id="PIRSF001604">
    <property type="entry name" value="LigA"/>
    <property type="match status" value="1"/>
</dbReference>
<dbReference type="SMART" id="SM00292">
    <property type="entry name" value="BRCT"/>
    <property type="match status" value="1"/>
</dbReference>
<dbReference type="SMART" id="SM00278">
    <property type="entry name" value="HhH1"/>
    <property type="match status" value="4"/>
</dbReference>
<dbReference type="SMART" id="SM00532">
    <property type="entry name" value="LIGANc"/>
    <property type="match status" value="1"/>
</dbReference>
<dbReference type="SUPFAM" id="SSF52113">
    <property type="entry name" value="BRCT domain"/>
    <property type="match status" value="1"/>
</dbReference>
<dbReference type="SUPFAM" id="SSF56091">
    <property type="entry name" value="DNA ligase/mRNA capping enzyme, catalytic domain"/>
    <property type="match status" value="1"/>
</dbReference>
<dbReference type="SUPFAM" id="SSF50249">
    <property type="entry name" value="Nucleic acid-binding proteins"/>
    <property type="match status" value="1"/>
</dbReference>
<dbReference type="SUPFAM" id="SSF47781">
    <property type="entry name" value="RuvA domain 2-like"/>
    <property type="match status" value="1"/>
</dbReference>
<dbReference type="PROSITE" id="PS50172">
    <property type="entry name" value="BRCT"/>
    <property type="match status" value="1"/>
</dbReference>
<dbReference type="PROSITE" id="PS01055">
    <property type="entry name" value="DNA_LIGASE_N1"/>
    <property type="match status" value="1"/>
</dbReference>
<feature type="chain" id="PRO_0000380437" description="DNA ligase">
    <location>
        <begin position="1"/>
        <end position="674"/>
    </location>
</feature>
<feature type="domain" description="BRCT" evidence="1">
    <location>
        <begin position="598"/>
        <end position="674"/>
    </location>
</feature>
<feature type="active site" description="N6-AMP-lysine intermediate" evidence="1">
    <location>
        <position position="120"/>
    </location>
</feature>
<feature type="binding site" evidence="1">
    <location>
        <begin position="35"/>
        <end position="39"/>
    </location>
    <ligand>
        <name>NAD(+)</name>
        <dbReference type="ChEBI" id="CHEBI:57540"/>
    </ligand>
</feature>
<feature type="binding site" evidence="1">
    <location>
        <begin position="84"/>
        <end position="85"/>
    </location>
    <ligand>
        <name>NAD(+)</name>
        <dbReference type="ChEBI" id="CHEBI:57540"/>
    </ligand>
</feature>
<feature type="binding site" evidence="1">
    <location>
        <position position="118"/>
    </location>
    <ligand>
        <name>NAD(+)</name>
        <dbReference type="ChEBI" id="CHEBI:57540"/>
    </ligand>
</feature>
<feature type="binding site" evidence="1">
    <location>
        <position position="141"/>
    </location>
    <ligand>
        <name>NAD(+)</name>
        <dbReference type="ChEBI" id="CHEBI:57540"/>
    </ligand>
</feature>
<feature type="binding site" evidence="1">
    <location>
        <position position="184"/>
    </location>
    <ligand>
        <name>NAD(+)</name>
        <dbReference type="ChEBI" id="CHEBI:57540"/>
    </ligand>
</feature>
<feature type="binding site" evidence="1">
    <location>
        <position position="297"/>
    </location>
    <ligand>
        <name>NAD(+)</name>
        <dbReference type="ChEBI" id="CHEBI:57540"/>
    </ligand>
</feature>
<feature type="binding site" evidence="1">
    <location>
        <position position="321"/>
    </location>
    <ligand>
        <name>NAD(+)</name>
        <dbReference type="ChEBI" id="CHEBI:57540"/>
    </ligand>
</feature>
<feature type="binding site" evidence="1">
    <location>
        <position position="415"/>
    </location>
    <ligand>
        <name>Zn(2+)</name>
        <dbReference type="ChEBI" id="CHEBI:29105"/>
    </ligand>
</feature>
<feature type="binding site" evidence="1">
    <location>
        <position position="418"/>
    </location>
    <ligand>
        <name>Zn(2+)</name>
        <dbReference type="ChEBI" id="CHEBI:29105"/>
    </ligand>
</feature>
<feature type="binding site" evidence="1">
    <location>
        <position position="433"/>
    </location>
    <ligand>
        <name>Zn(2+)</name>
        <dbReference type="ChEBI" id="CHEBI:29105"/>
    </ligand>
</feature>
<feature type="binding site" evidence="1">
    <location>
        <position position="439"/>
    </location>
    <ligand>
        <name>Zn(2+)</name>
        <dbReference type="ChEBI" id="CHEBI:29105"/>
    </ligand>
</feature>
<reference key="1">
    <citation type="submission" date="2008-06" db="EMBL/GenBank/DDBJ databases">
        <title>Complete sequence of Pelodictyon phaeoclathratiforme BU-1.</title>
        <authorList>
            <consortium name="US DOE Joint Genome Institute"/>
            <person name="Lucas S."/>
            <person name="Copeland A."/>
            <person name="Lapidus A."/>
            <person name="Glavina del Rio T."/>
            <person name="Dalin E."/>
            <person name="Tice H."/>
            <person name="Bruce D."/>
            <person name="Goodwin L."/>
            <person name="Pitluck S."/>
            <person name="Schmutz J."/>
            <person name="Larimer F."/>
            <person name="Land M."/>
            <person name="Hauser L."/>
            <person name="Kyrpides N."/>
            <person name="Mikhailova N."/>
            <person name="Liu Z."/>
            <person name="Li T."/>
            <person name="Zhao F."/>
            <person name="Overmann J."/>
            <person name="Bryant D.A."/>
            <person name="Richardson P."/>
        </authorList>
    </citation>
    <scope>NUCLEOTIDE SEQUENCE [LARGE SCALE GENOMIC DNA]</scope>
    <source>
        <strain>DSM 5477 / BU-1</strain>
    </source>
</reference>
<sequence>MTDIIRAAEAIAQLRREIERHTHLYYVEAKPELSDFEFDQLLDQLITLERQFPQLLTPDSPSQRVGGAITREFPAVQHREPMLSLSNSYSITEVEEFYNRVRKLLALEGVVEQEMVAELKFDGVAISLIYQDGILVRGATRGDGRQGDDITANLKTVATIPLRLEETLVAALQGEERAIEVRGEVFMRKEDFERLNESRPDEDRFANPRNATAGSLKLQDSGEVARRSMSFVAYYLKGLKDESTPHIHRLELLARLGFFTGDHYRLCNTLEEINTYIAEWAEKRWQLPYETDGVVLKLNDVPFREKLGATAKSPRWAIAYKYPAQQARSVLQNVLFQVGRLGTITPVAELEPVLLAGSTVSRSTLHNFDEIERLGLMLRDRVIIEKSGEVIPKVVRTLFEERPADAMPILPPTHCPSCGAPLVRPENEVSYSCPNEEECPAQIKGRLLHFASRNAMDIQTLGDALVEQLVAKGLVKDPGDLYFLQEPQLEKLERMGPKSAQNILRALEKSREKSYERLLYALGIRHVGRATARELSQACPSIDLLREASEEQLATIPDIGPVVARSIIDYFAKPSWPHLLEKLRTAALQLSASEPKEQVNRNFEGVTVLFTGSLERYDRQKASELVLERGGRVVGSVSKKTGMVVAGQDPGSKLQKANKLGVRVVSEDEFEAML</sequence>
<comment type="function">
    <text evidence="1">DNA ligase that catalyzes the formation of phosphodiester linkages between 5'-phosphoryl and 3'-hydroxyl groups in double-stranded DNA using NAD as a coenzyme and as the energy source for the reaction. It is essential for DNA replication and repair of damaged DNA.</text>
</comment>
<comment type="catalytic activity">
    <reaction evidence="1">
        <text>NAD(+) + (deoxyribonucleotide)n-3'-hydroxyl + 5'-phospho-(deoxyribonucleotide)m = (deoxyribonucleotide)n+m + AMP + beta-nicotinamide D-nucleotide.</text>
        <dbReference type="EC" id="6.5.1.2"/>
    </reaction>
</comment>
<comment type="cofactor">
    <cofactor evidence="1">
        <name>Mg(2+)</name>
        <dbReference type="ChEBI" id="CHEBI:18420"/>
    </cofactor>
    <cofactor evidence="1">
        <name>Mn(2+)</name>
        <dbReference type="ChEBI" id="CHEBI:29035"/>
    </cofactor>
</comment>
<comment type="similarity">
    <text evidence="1">Belongs to the NAD-dependent DNA ligase family. LigA subfamily.</text>
</comment>
<protein>
    <recommendedName>
        <fullName evidence="1">DNA ligase</fullName>
        <ecNumber evidence="1">6.5.1.2</ecNumber>
    </recommendedName>
    <alternativeName>
        <fullName evidence="1">Polydeoxyribonucleotide synthase [NAD(+)]</fullName>
    </alternativeName>
</protein>
<organism>
    <name type="scientific">Pelodictyon phaeoclathratiforme (strain DSM 5477 / BU-1)</name>
    <dbReference type="NCBI Taxonomy" id="324925"/>
    <lineage>
        <taxon>Bacteria</taxon>
        <taxon>Pseudomonadati</taxon>
        <taxon>Chlorobiota</taxon>
        <taxon>Chlorobiia</taxon>
        <taxon>Chlorobiales</taxon>
        <taxon>Chlorobiaceae</taxon>
        <taxon>Chlorobium/Pelodictyon group</taxon>
        <taxon>Pelodictyon</taxon>
    </lineage>
</organism>
<proteinExistence type="inferred from homology"/>
<evidence type="ECO:0000255" key="1">
    <source>
        <dbReference type="HAMAP-Rule" id="MF_01588"/>
    </source>
</evidence>
<name>DNLJ_PELPB</name>